<gene>
    <name evidence="1" type="primary">rplM</name>
    <name type="ordered locus">FMG_1479</name>
</gene>
<sequence>MKTYIPKKDDIQRKWYVVDATDVVLGRLSTEVASILRGKNKPMFTPNADVGDYVIVINAEKVKLTGKKLEQKELRHYTGYAGGLKSITYKDLMQKDPERAVTHAIVGMLPHNSLGRQMAKKLRVYRGADHDHIAQNPEVLEIK</sequence>
<dbReference type="EMBL" id="AP008971">
    <property type="protein sequence ID" value="BAG08897.1"/>
    <property type="molecule type" value="Genomic_DNA"/>
</dbReference>
<dbReference type="RefSeq" id="WP_002838046.1">
    <property type="nucleotide sequence ID" value="NC_010376.1"/>
</dbReference>
<dbReference type="SMR" id="B0S3F7"/>
<dbReference type="STRING" id="334413.FMG_1479"/>
<dbReference type="GeneID" id="60839532"/>
<dbReference type="KEGG" id="fma:FMG_1479"/>
<dbReference type="eggNOG" id="COG0102">
    <property type="taxonomic scope" value="Bacteria"/>
</dbReference>
<dbReference type="HOGENOM" id="CLU_082184_2_2_9"/>
<dbReference type="Proteomes" id="UP000001319">
    <property type="component" value="Chromosome"/>
</dbReference>
<dbReference type="GO" id="GO:0022625">
    <property type="term" value="C:cytosolic large ribosomal subunit"/>
    <property type="evidence" value="ECO:0007669"/>
    <property type="project" value="TreeGrafter"/>
</dbReference>
<dbReference type="GO" id="GO:0003729">
    <property type="term" value="F:mRNA binding"/>
    <property type="evidence" value="ECO:0007669"/>
    <property type="project" value="TreeGrafter"/>
</dbReference>
<dbReference type="GO" id="GO:0003735">
    <property type="term" value="F:structural constituent of ribosome"/>
    <property type="evidence" value="ECO:0007669"/>
    <property type="project" value="InterPro"/>
</dbReference>
<dbReference type="GO" id="GO:0017148">
    <property type="term" value="P:negative regulation of translation"/>
    <property type="evidence" value="ECO:0007669"/>
    <property type="project" value="TreeGrafter"/>
</dbReference>
<dbReference type="GO" id="GO:0006412">
    <property type="term" value="P:translation"/>
    <property type="evidence" value="ECO:0007669"/>
    <property type="project" value="UniProtKB-UniRule"/>
</dbReference>
<dbReference type="CDD" id="cd00392">
    <property type="entry name" value="Ribosomal_L13"/>
    <property type="match status" value="1"/>
</dbReference>
<dbReference type="FunFam" id="3.90.1180.10:FF:000001">
    <property type="entry name" value="50S ribosomal protein L13"/>
    <property type="match status" value="1"/>
</dbReference>
<dbReference type="Gene3D" id="3.90.1180.10">
    <property type="entry name" value="Ribosomal protein L13"/>
    <property type="match status" value="1"/>
</dbReference>
<dbReference type="HAMAP" id="MF_01366">
    <property type="entry name" value="Ribosomal_uL13"/>
    <property type="match status" value="1"/>
</dbReference>
<dbReference type="InterPro" id="IPR005822">
    <property type="entry name" value="Ribosomal_uL13"/>
</dbReference>
<dbReference type="InterPro" id="IPR005823">
    <property type="entry name" value="Ribosomal_uL13_bac-type"/>
</dbReference>
<dbReference type="InterPro" id="IPR023563">
    <property type="entry name" value="Ribosomal_uL13_CS"/>
</dbReference>
<dbReference type="InterPro" id="IPR036899">
    <property type="entry name" value="Ribosomal_uL13_sf"/>
</dbReference>
<dbReference type="NCBIfam" id="TIGR01066">
    <property type="entry name" value="rplM_bact"/>
    <property type="match status" value="1"/>
</dbReference>
<dbReference type="PANTHER" id="PTHR11545:SF2">
    <property type="entry name" value="LARGE RIBOSOMAL SUBUNIT PROTEIN UL13M"/>
    <property type="match status" value="1"/>
</dbReference>
<dbReference type="PANTHER" id="PTHR11545">
    <property type="entry name" value="RIBOSOMAL PROTEIN L13"/>
    <property type="match status" value="1"/>
</dbReference>
<dbReference type="Pfam" id="PF00572">
    <property type="entry name" value="Ribosomal_L13"/>
    <property type="match status" value="1"/>
</dbReference>
<dbReference type="PIRSF" id="PIRSF002181">
    <property type="entry name" value="Ribosomal_L13"/>
    <property type="match status" value="1"/>
</dbReference>
<dbReference type="SUPFAM" id="SSF52161">
    <property type="entry name" value="Ribosomal protein L13"/>
    <property type="match status" value="1"/>
</dbReference>
<dbReference type="PROSITE" id="PS00783">
    <property type="entry name" value="RIBOSOMAL_L13"/>
    <property type="match status" value="1"/>
</dbReference>
<accession>B0S3F7</accession>
<organism>
    <name type="scientific">Finegoldia magna (strain ATCC 29328 / DSM 20472 / WAL 2508)</name>
    <name type="common">Peptostreptococcus magnus</name>
    <dbReference type="NCBI Taxonomy" id="334413"/>
    <lineage>
        <taxon>Bacteria</taxon>
        <taxon>Bacillati</taxon>
        <taxon>Bacillota</taxon>
        <taxon>Tissierellia</taxon>
        <taxon>Tissierellales</taxon>
        <taxon>Peptoniphilaceae</taxon>
        <taxon>Finegoldia</taxon>
    </lineage>
</organism>
<feature type="chain" id="PRO_1000144131" description="Large ribosomal subunit protein uL13">
    <location>
        <begin position="1"/>
        <end position="143"/>
    </location>
</feature>
<reference key="1">
    <citation type="journal article" date="2008" name="DNA Res.">
        <title>Complete genome sequence of Finegoldia magna, an anaerobic opportunistic pathogen.</title>
        <authorList>
            <person name="Goto T."/>
            <person name="Yamashita A."/>
            <person name="Hirakawa H."/>
            <person name="Matsutani M."/>
            <person name="Todo K."/>
            <person name="Ohshima K."/>
            <person name="Toh H."/>
            <person name="Miyamoto K."/>
            <person name="Kuhara S."/>
            <person name="Hattori M."/>
            <person name="Shimizu T."/>
            <person name="Akimoto S."/>
        </authorList>
    </citation>
    <scope>NUCLEOTIDE SEQUENCE [LARGE SCALE GENOMIC DNA]</scope>
    <source>
        <strain>ATCC 29328 / DSM 20472 / WAL 2508</strain>
    </source>
</reference>
<proteinExistence type="inferred from homology"/>
<protein>
    <recommendedName>
        <fullName evidence="1">Large ribosomal subunit protein uL13</fullName>
    </recommendedName>
    <alternativeName>
        <fullName evidence="2">50S ribosomal protein L13</fullName>
    </alternativeName>
</protein>
<name>RL13_FINM2</name>
<comment type="function">
    <text evidence="1">This protein is one of the early assembly proteins of the 50S ribosomal subunit, although it is not seen to bind rRNA by itself. It is important during the early stages of 50S assembly.</text>
</comment>
<comment type="subunit">
    <text evidence="1">Part of the 50S ribosomal subunit.</text>
</comment>
<comment type="similarity">
    <text evidence="1">Belongs to the universal ribosomal protein uL13 family.</text>
</comment>
<keyword id="KW-1185">Reference proteome</keyword>
<keyword id="KW-0687">Ribonucleoprotein</keyword>
<keyword id="KW-0689">Ribosomal protein</keyword>
<evidence type="ECO:0000255" key="1">
    <source>
        <dbReference type="HAMAP-Rule" id="MF_01366"/>
    </source>
</evidence>
<evidence type="ECO:0000305" key="2"/>